<sequence length="227" mass="26314">MGRGKIVIQKIDDSTSRQVTFSKRRKGLIKKAKELAILCDAEVCLIIFSNTDKLYDFASSSVKSTIERFNTAKMEEQELMNPASEVKFWQREAETLRQELHSLQENYRQLTGVELNGLSVKELQNIESQLEMSLRGIRMKREQILTNEIKELTRKRNLVHHENLELSRKVQRIHQENVELYKKAYGTSNTNGLGHHELVDAVYESHAQVRLQLSQPEQSHYKTSSNS</sequence>
<name>AGL17_ARATH</name>
<reference key="1">
    <citation type="journal article" date="1999" name="Nature">
        <title>Sequence and analysis of chromosome 2 of the plant Arabidopsis thaliana.</title>
        <authorList>
            <person name="Lin X."/>
            <person name="Kaul S."/>
            <person name="Rounsley S.D."/>
            <person name="Shea T.P."/>
            <person name="Benito M.-I."/>
            <person name="Town C.D."/>
            <person name="Fujii C.Y."/>
            <person name="Mason T.M."/>
            <person name="Bowman C.L."/>
            <person name="Barnstead M.E."/>
            <person name="Feldblyum T.V."/>
            <person name="Buell C.R."/>
            <person name="Ketchum K.A."/>
            <person name="Lee J.J."/>
            <person name="Ronning C.M."/>
            <person name="Koo H.L."/>
            <person name="Moffat K.S."/>
            <person name="Cronin L.A."/>
            <person name="Shen M."/>
            <person name="Pai G."/>
            <person name="Van Aken S."/>
            <person name="Umayam L."/>
            <person name="Tallon L.J."/>
            <person name="Gill J.E."/>
            <person name="Adams M.D."/>
            <person name="Carrera A.J."/>
            <person name="Creasy T.H."/>
            <person name="Goodman H.M."/>
            <person name="Somerville C.R."/>
            <person name="Copenhaver G.P."/>
            <person name="Preuss D."/>
            <person name="Nierman W.C."/>
            <person name="White O."/>
            <person name="Eisen J.A."/>
            <person name="Salzberg S.L."/>
            <person name="Fraser C.M."/>
            <person name="Venter J.C."/>
        </authorList>
    </citation>
    <scope>NUCLEOTIDE SEQUENCE [LARGE SCALE GENOMIC DNA]</scope>
    <source>
        <strain>cv. Columbia</strain>
    </source>
</reference>
<reference key="2">
    <citation type="journal article" date="2017" name="Plant J.">
        <title>Araport11: a complete reannotation of the Arabidopsis thaliana reference genome.</title>
        <authorList>
            <person name="Cheng C.Y."/>
            <person name="Krishnakumar V."/>
            <person name="Chan A.P."/>
            <person name="Thibaud-Nissen F."/>
            <person name="Schobel S."/>
            <person name="Town C.D."/>
        </authorList>
    </citation>
    <scope>GENOME REANNOTATION</scope>
    <source>
        <strain>cv. Columbia</strain>
    </source>
</reference>
<reference key="3">
    <citation type="journal article" date="1995" name="Plant Cell">
        <title>Diverse roles for MADS box genes in Arabidopsis development.</title>
        <authorList>
            <person name="Rounsley S.D."/>
            <person name="Ditta G.S."/>
            <person name="Yanofsky M.F."/>
        </authorList>
    </citation>
    <scope>NUCLEOTIDE SEQUENCE [MRNA] OF 8-227</scope>
    <source>
        <strain>cv. Landsberg erecta</strain>
        <tissue>Root</tissue>
    </source>
</reference>
<dbReference type="EMBL" id="AC006340">
    <property type="protein sequence ID" value="AAD15571.1"/>
    <property type="molecule type" value="Genomic_DNA"/>
</dbReference>
<dbReference type="EMBL" id="CP002685">
    <property type="protein sequence ID" value="AEC07331.1"/>
    <property type="molecule type" value="Genomic_DNA"/>
</dbReference>
<dbReference type="EMBL" id="CP002685">
    <property type="protein sequence ID" value="ANM62286.1"/>
    <property type="molecule type" value="Genomic_DNA"/>
</dbReference>
<dbReference type="EMBL" id="U20186">
    <property type="protein sequence ID" value="AAC49084.1"/>
    <property type="molecule type" value="mRNA"/>
</dbReference>
<dbReference type="PIR" id="H84614">
    <property type="entry name" value="H84614"/>
</dbReference>
<dbReference type="RefSeq" id="NP_001324454.1">
    <property type="nucleotide sequence ID" value="NM_001335805.1"/>
</dbReference>
<dbReference type="RefSeq" id="NP_179848.1">
    <property type="nucleotide sequence ID" value="NM_127828.3"/>
</dbReference>
<dbReference type="SMR" id="Q38840"/>
<dbReference type="BioGRID" id="2147">
    <property type="interactions" value="10"/>
</dbReference>
<dbReference type="FunCoup" id="Q38840">
    <property type="interactions" value="25"/>
</dbReference>
<dbReference type="IntAct" id="Q38840">
    <property type="interactions" value="10"/>
</dbReference>
<dbReference type="STRING" id="3702.Q38840"/>
<dbReference type="PaxDb" id="3702-AT2G22630.1"/>
<dbReference type="EnsemblPlants" id="AT2G22630.1">
    <property type="protein sequence ID" value="AT2G22630.1"/>
    <property type="gene ID" value="AT2G22630"/>
</dbReference>
<dbReference type="EnsemblPlants" id="AT2G22630.2">
    <property type="protein sequence ID" value="AT2G22630.2"/>
    <property type="gene ID" value="AT2G22630"/>
</dbReference>
<dbReference type="GeneID" id="816794"/>
<dbReference type="Gramene" id="AT2G22630.1">
    <property type="protein sequence ID" value="AT2G22630.1"/>
    <property type="gene ID" value="AT2G22630"/>
</dbReference>
<dbReference type="Gramene" id="AT2G22630.2">
    <property type="protein sequence ID" value="AT2G22630.2"/>
    <property type="gene ID" value="AT2G22630"/>
</dbReference>
<dbReference type="KEGG" id="ath:AT2G22630"/>
<dbReference type="Araport" id="AT2G22630"/>
<dbReference type="TAIR" id="AT2G22630">
    <property type="gene designation" value="AGL17"/>
</dbReference>
<dbReference type="eggNOG" id="KOG0014">
    <property type="taxonomic scope" value="Eukaryota"/>
</dbReference>
<dbReference type="HOGENOM" id="CLU_053053_2_0_1"/>
<dbReference type="InParanoid" id="Q38840"/>
<dbReference type="OMA" id="YKEENHH"/>
<dbReference type="OrthoDB" id="1898716at2759"/>
<dbReference type="PhylomeDB" id="Q38840"/>
<dbReference type="PRO" id="PR:Q38840"/>
<dbReference type="Proteomes" id="UP000006548">
    <property type="component" value="Chromosome 2"/>
</dbReference>
<dbReference type="ExpressionAtlas" id="Q38840">
    <property type="expression patterns" value="baseline and differential"/>
</dbReference>
<dbReference type="GO" id="GO:0005634">
    <property type="term" value="C:nucleus"/>
    <property type="evidence" value="ECO:0007669"/>
    <property type="project" value="UniProtKB-SubCell"/>
</dbReference>
<dbReference type="GO" id="GO:0003700">
    <property type="term" value="F:DNA-binding transcription factor activity"/>
    <property type="evidence" value="ECO:0000250"/>
    <property type="project" value="TAIR"/>
</dbReference>
<dbReference type="GO" id="GO:0046983">
    <property type="term" value="F:protein dimerization activity"/>
    <property type="evidence" value="ECO:0007669"/>
    <property type="project" value="InterPro"/>
</dbReference>
<dbReference type="GO" id="GO:0000977">
    <property type="term" value="F:RNA polymerase II transcription regulatory region sequence-specific DNA binding"/>
    <property type="evidence" value="ECO:0007669"/>
    <property type="project" value="InterPro"/>
</dbReference>
<dbReference type="GO" id="GO:0048578">
    <property type="term" value="P:positive regulation of long-day photoperiodism, flowering"/>
    <property type="evidence" value="ECO:0000315"/>
    <property type="project" value="TAIR"/>
</dbReference>
<dbReference type="GO" id="GO:0045944">
    <property type="term" value="P:positive regulation of transcription by RNA polymerase II"/>
    <property type="evidence" value="ECO:0007669"/>
    <property type="project" value="InterPro"/>
</dbReference>
<dbReference type="CDD" id="cd00265">
    <property type="entry name" value="MADS_MEF2_like"/>
    <property type="match status" value="1"/>
</dbReference>
<dbReference type="Gene3D" id="3.40.1810.10">
    <property type="entry name" value="Transcription factor, MADS-box"/>
    <property type="match status" value="1"/>
</dbReference>
<dbReference type="InterPro" id="IPR050142">
    <property type="entry name" value="MADS-box/MEF2_TF"/>
</dbReference>
<dbReference type="InterPro" id="IPR033896">
    <property type="entry name" value="MEF2-like_N"/>
</dbReference>
<dbReference type="InterPro" id="IPR002487">
    <property type="entry name" value="TF_Kbox"/>
</dbReference>
<dbReference type="InterPro" id="IPR002100">
    <property type="entry name" value="TF_MADSbox"/>
</dbReference>
<dbReference type="InterPro" id="IPR036879">
    <property type="entry name" value="TF_MADSbox_sf"/>
</dbReference>
<dbReference type="PANTHER" id="PTHR48019">
    <property type="entry name" value="SERUM RESPONSE FACTOR HOMOLOG"/>
    <property type="match status" value="1"/>
</dbReference>
<dbReference type="Pfam" id="PF01486">
    <property type="entry name" value="K-box"/>
    <property type="match status" value="1"/>
</dbReference>
<dbReference type="Pfam" id="PF00319">
    <property type="entry name" value="SRF-TF"/>
    <property type="match status" value="1"/>
</dbReference>
<dbReference type="PRINTS" id="PR00404">
    <property type="entry name" value="MADSDOMAIN"/>
</dbReference>
<dbReference type="SMART" id="SM00432">
    <property type="entry name" value="MADS"/>
    <property type="match status" value="1"/>
</dbReference>
<dbReference type="SUPFAM" id="SSF55455">
    <property type="entry name" value="SRF-like"/>
    <property type="match status" value="1"/>
</dbReference>
<dbReference type="PROSITE" id="PS51297">
    <property type="entry name" value="K_BOX"/>
    <property type="match status" value="1"/>
</dbReference>
<dbReference type="PROSITE" id="PS00350">
    <property type="entry name" value="MADS_BOX_1"/>
    <property type="match status" value="1"/>
</dbReference>
<dbReference type="PROSITE" id="PS50066">
    <property type="entry name" value="MADS_BOX_2"/>
    <property type="match status" value="1"/>
</dbReference>
<evidence type="ECO:0000255" key="1">
    <source>
        <dbReference type="PROSITE-ProRule" id="PRU00251"/>
    </source>
</evidence>
<evidence type="ECO:0000255" key="2">
    <source>
        <dbReference type="PROSITE-ProRule" id="PRU00629"/>
    </source>
</evidence>
<evidence type="ECO:0000305" key="3"/>
<proteinExistence type="evidence at protein level"/>
<protein>
    <recommendedName>
        <fullName>Agamous-like MADS-box protein AGL17</fullName>
    </recommendedName>
</protein>
<accession>Q38840</accession>
<accession>Q9ZQ50</accession>
<keyword id="KW-0238">DNA-binding</keyword>
<keyword id="KW-0539">Nucleus</keyword>
<keyword id="KW-1185">Reference proteome</keyword>
<keyword id="KW-0804">Transcription</keyword>
<keyword id="KW-0805">Transcription regulation</keyword>
<feature type="chain" id="PRO_0000199476" description="Agamous-like MADS-box protein AGL17">
    <location>
        <begin position="1"/>
        <end position="227"/>
    </location>
</feature>
<feature type="domain" description="MADS-box" evidence="1">
    <location>
        <begin position="3"/>
        <end position="57"/>
    </location>
</feature>
<feature type="domain" description="K-box" evidence="2">
    <location>
        <begin position="86"/>
        <end position="176"/>
    </location>
</feature>
<feature type="sequence conflict" description="In Ref. 3; AAC49084." evidence="3" ref="3">
    <original>AVYESHAQVRLQLSQPEQSHYKTSSNS</original>
    <variation>QFMNPMHRLGCS</variation>
    <location>
        <begin position="201"/>
        <end position="227"/>
    </location>
</feature>
<comment type="function">
    <text>Probable transcription factor.</text>
</comment>
<comment type="interaction">
    <interactant intactId="EBI-622087">
        <id>Q38840</id>
    </interactant>
    <interactant intactId="EBI-621986">
        <id>Q9SZJ6</id>
        <label>AGL21</label>
    </interactant>
    <organismsDiffer>false</organismsDiffer>
    <experiments>4</experiments>
</comment>
<comment type="subcellular location">
    <subcellularLocation>
        <location evidence="1">Nucleus</location>
    </subcellularLocation>
</comment>
<comment type="tissue specificity">
    <text>Preferentially expressed in roots.</text>
</comment>
<gene>
    <name type="primary">AGL17</name>
    <name type="ordered locus">At2g22630</name>
    <name type="ORF">T9I22.7</name>
</gene>
<organism>
    <name type="scientific">Arabidopsis thaliana</name>
    <name type="common">Mouse-ear cress</name>
    <dbReference type="NCBI Taxonomy" id="3702"/>
    <lineage>
        <taxon>Eukaryota</taxon>
        <taxon>Viridiplantae</taxon>
        <taxon>Streptophyta</taxon>
        <taxon>Embryophyta</taxon>
        <taxon>Tracheophyta</taxon>
        <taxon>Spermatophyta</taxon>
        <taxon>Magnoliopsida</taxon>
        <taxon>eudicotyledons</taxon>
        <taxon>Gunneridae</taxon>
        <taxon>Pentapetalae</taxon>
        <taxon>rosids</taxon>
        <taxon>malvids</taxon>
        <taxon>Brassicales</taxon>
        <taxon>Brassicaceae</taxon>
        <taxon>Camelineae</taxon>
        <taxon>Arabidopsis</taxon>
    </lineage>
</organism>